<accession>Q8VCY8</accession>
<accession>Q8BIE4</accession>
<protein>
    <recommendedName>
        <fullName evidence="2">Phospholipid phosphatase-related protein type 2</fullName>
    </recommendedName>
    <alternativeName>
        <fullName evidence="1">Inactive phospholipid phosphatase PLPPR2</fullName>
    </alternativeName>
    <alternativeName>
        <fullName evidence="2">Lipid phosphate phosphatase-related protein type 2</fullName>
    </alternativeName>
    <alternativeName>
        <fullName evidence="9">Plasticity-related gene 4 protein</fullName>
        <shortName evidence="5">PRG-4</shortName>
    </alternativeName>
</protein>
<comment type="subcellular location">
    <subcellularLocation>
        <location evidence="3">Membrane</location>
        <topology evidence="3">Multi-pass membrane protein</topology>
    </subcellularLocation>
</comment>
<comment type="alternative products">
    <event type="alternative splicing"/>
    <isoform>
        <id>Q8VCY8-1</id>
        <name>1</name>
        <sequence type="displayed"/>
    </isoform>
    <isoform>
        <id>Q8VCY8-2</id>
        <name>2</name>
        <sequence type="described" ref="VSP_031012"/>
    </isoform>
</comment>
<comment type="similarity">
    <text evidence="8">Belongs to the PA-phosphatase related phosphoesterase family.</text>
</comment>
<comment type="caution">
    <text evidence="1">Has most probably no phospholipid phosphatase activity (By similarity). This is supported by the fact that the phosphatase sequence motifs as well as the His residue acting as a nucleophile in active phosphatases of the PA-phosphatase related phosphoesterase family are not conserved (By similarity).</text>
</comment>
<reference key="1">
    <citation type="journal article" date="2004" name="Eur. J. Neurosci.">
        <title>Molecular cloning and expression regulation of PRG-3, a new member of the plasticity-related gene family.</title>
        <authorList>
            <person name="Savaskan N.E."/>
            <person name="Brauer A.U."/>
            <person name="Nitsch R."/>
        </authorList>
    </citation>
    <scope>NUCLEOTIDE SEQUENCE [MRNA] (ISOFORM 1)</scope>
    <source>
        <strain>C57BL/6J</strain>
        <tissue>Brain</tissue>
    </source>
</reference>
<reference key="2">
    <citation type="journal article" date="2005" name="Science">
        <title>The transcriptional landscape of the mammalian genome.</title>
        <authorList>
            <person name="Carninci P."/>
            <person name="Kasukawa T."/>
            <person name="Katayama S."/>
            <person name="Gough J."/>
            <person name="Frith M.C."/>
            <person name="Maeda N."/>
            <person name="Oyama R."/>
            <person name="Ravasi T."/>
            <person name="Lenhard B."/>
            <person name="Wells C."/>
            <person name="Kodzius R."/>
            <person name="Shimokawa K."/>
            <person name="Bajic V.B."/>
            <person name="Brenner S.E."/>
            <person name="Batalov S."/>
            <person name="Forrest A.R."/>
            <person name="Zavolan M."/>
            <person name="Davis M.J."/>
            <person name="Wilming L.G."/>
            <person name="Aidinis V."/>
            <person name="Allen J.E."/>
            <person name="Ambesi-Impiombato A."/>
            <person name="Apweiler R."/>
            <person name="Aturaliya R.N."/>
            <person name="Bailey T.L."/>
            <person name="Bansal M."/>
            <person name="Baxter L."/>
            <person name="Beisel K.W."/>
            <person name="Bersano T."/>
            <person name="Bono H."/>
            <person name="Chalk A.M."/>
            <person name="Chiu K.P."/>
            <person name="Choudhary V."/>
            <person name="Christoffels A."/>
            <person name="Clutterbuck D.R."/>
            <person name="Crowe M.L."/>
            <person name="Dalla E."/>
            <person name="Dalrymple B.P."/>
            <person name="de Bono B."/>
            <person name="Della Gatta G."/>
            <person name="di Bernardo D."/>
            <person name="Down T."/>
            <person name="Engstrom P."/>
            <person name="Fagiolini M."/>
            <person name="Faulkner G."/>
            <person name="Fletcher C.F."/>
            <person name="Fukushima T."/>
            <person name="Furuno M."/>
            <person name="Futaki S."/>
            <person name="Gariboldi M."/>
            <person name="Georgii-Hemming P."/>
            <person name="Gingeras T.R."/>
            <person name="Gojobori T."/>
            <person name="Green R.E."/>
            <person name="Gustincich S."/>
            <person name="Harbers M."/>
            <person name="Hayashi Y."/>
            <person name="Hensch T.K."/>
            <person name="Hirokawa N."/>
            <person name="Hill D."/>
            <person name="Huminiecki L."/>
            <person name="Iacono M."/>
            <person name="Ikeo K."/>
            <person name="Iwama A."/>
            <person name="Ishikawa T."/>
            <person name="Jakt M."/>
            <person name="Kanapin A."/>
            <person name="Katoh M."/>
            <person name="Kawasawa Y."/>
            <person name="Kelso J."/>
            <person name="Kitamura H."/>
            <person name="Kitano H."/>
            <person name="Kollias G."/>
            <person name="Krishnan S.P."/>
            <person name="Kruger A."/>
            <person name="Kummerfeld S.K."/>
            <person name="Kurochkin I.V."/>
            <person name="Lareau L.F."/>
            <person name="Lazarevic D."/>
            <person name="Lipovich L."/>
            <person name="Liu J."/>
            <person name="Liuni S."/>
            <person name="McWilliam S."/>
            <person name="Madan Babu M."/>
            <person name="Madera M."/>
            <person name="Marchionni L."/>
            <person name="Matsuda H."/>
            <person name="Matsuzawa S."/>
            <person name="Miki H."/>
            <person name="Mignone F."/>
            <person name="Miyake S."/>
            <person name="Morris K."/>
            <person name="Mottagui-Tabar S."/>
            <person name="Mulder N."/>
            <person name="Nakano N."/>
            <person name="Nakauchi H."/>
            <person name="Ng P."/>
            <person name="Nilsson R."/>
            <person name="Nishiguchi S."/>
            <person name="Nishikawa S."/>
            <person name="Nori F."/>
            <person name="Ohara O."/>
            <person name="Okazaki Y."/>
            <person name="Orlando V."/>
            <person name="Pang K.C."/>
            <person name="Pavan W.J."/>
            <person name="Pavesi G."/>
            <person name="Pesole G."/>
            <person name="Petrovsky N."/>
            <person name="Piazza S."/>
            <person name="Reed J."/>
            <person name="Reid J.F."/>
            <person name="Ring B.Z."/>
            <person name="Ringwald M."/>
            <person name="Rost B."/>
            <person name="Ruan Y."/>
            <person name="Salzberg S.L."/>
            <person name="Sandelin A."/>
            <person name="Schneider C."/>
            <person name="Schoenbach C."/>
            <person name="Sekiguchi K."/>
            <person name="Semple C.A."/>
            <person name="Seno S."/>
            <person name="Sessa L."/>
            <person name="Sheng Y."/>
            <person name="Shibata Y."/>
            <person name="Shimada H."/>
            <person name="Shimada K."/>
            <person name="Silva D."/>
            <person name="Sinclair B."/>
            <person name="Sperling S."/>
            <person name="Stupka E."/>
            <person name="Sugiura K."/>
            <person name="Sultana R."/>
            <person name="Takenaka Y."/>
            <person name="Taki K."/>
            <person name="Tammoja K."/>
            <person name="Tan S.L."/>
            <person name="Tang S."/>
            <person name="Taylor M.S."/>
            <person name="Tegner J."/>
            <person name="Teichmann S.A."/>
            <person name="Ueda H.R."/>
            <person name="van Nimwegen E."/>
            <person name="Verardo R."/>
            <person name="Wei C.L."/>
            <person name="Yagi K."/>
            <person name="Yamanishi H."/>
            <person name="Zabarovsky E."/>
            <person name="Zhu S."/>
            <person name="Zimmer A."/>
            <person name="Hide W."/>
            <person name="Bult C."/>
            <person name="Grimmond S.M."/>
            <person name="Teasdale R.D."/>
            <person name="Liu E.T."/>
            <person name="Brusic V."/>
            <person name="Quackenbush J."/>
            <person name="Wahlestedt C."/>
            <person name="Mattick J.S."/>
            <person name="Hume D.A."/>
            <person name="Kai C."/>
            <person name="Sasaki D."/>
            <person name="Tomaru Y."/>
            <person name="Fukuda S."/>
            <person name="Kanamori-Katayama M."/>
            <person name="Suzuki M."/>
            <person name="Aoki J."/>
            <person name="Arakawa T."/>
            <person name="Iida J."/>
            <person name="Imamura K."/>
            <person name="Itoh M."/>
            <person name="Kato T."/>
            <person name="Kawaji H."/>
            <person name="Kawagashira N."/>
            <person name="Kawashima T."/>
            <person name="Kojima M."/>
            <person name="Kondo S."/>
            <person name="Konno H."/>
            <person name="Nakano K."/>
            <person name="Ninomiya N."/>
            <person name="Nishio T."/>
            <person name="Okada M."/>
            <person name="Plessy C."/>
            <person name="Shibata K."/>
            <person name="Shiraki T."/>
            <person name="Suzuki S."/>
            <person name="Tagami M."/>
            <person name="Waki K."/>
            <person name="Watahiki A."/>
            <person name="Okamura-Oho Y."/>
            <person name="Suzuki H."/>
            <person name="Kawai J."/>
            <person name="Hayashizaki Y."/>
        </authorList>
    </citation>
    <scope>NUCLEOTIDE SEQUENCE [LARGE SCALE MRNA] (ISOFORM 2)</scope>
    <source>
        <strain>C57BL/6J</strain>
        <tissue>Cerebellum</tissue>
    </source>
</reference>
<reference key="3">
    <citation type="journal article" date="2004" name="Genome Res.">
        <title>The status, quality, and expansion of the NIH full-length cDNA project: the Mammalian Gene Collection (MGC).</title>
        <authorList>
            <consortium name="The MGC Project Team"/>
        </authorList>
    </citation>
    <scope>NUCLEOTIDE SEQUENCE [LARGE SCALE MRNA] (ISOFORMS 1 AND 2)</scope>
    <source>
        <tissue>Eye</tissue>
    </source>
</reference>
<reference key="4">
    <citation type="journal article" date="2010" name="Cell">
        <title>A tissue-specific atlas of mouse protein phosphorylation and expression.</title>
        <authorList>
            <person name="Huttlin E.L."/>
            <person name="Jedrychowski M.P."/>
            <person name="Elias J.E."/>
            <person name="Goswami T."/>
            <person name="Rad R."/>
            <person name="Beausoleil S.A."/>
            <person name="Villen J."/>
            <person name="Haas W."/>
            <person name="Sowa M.E."/>
            <person name="Gygi S.P."/>
        </authorList>
    </citation>
    <scope>PHOSPHORYLATION [LARGE SCALE ANALYSIS] AT SER-299 AND SER-312</scope>
    <scope>PHOSPHORYLATION [LARGE SCALE ANALYSIS] AT SER-441 (ISOFORM 2)</scope>
    <scope>IDENTIFICATION BY MASS SPECTROMETRY [LARGE SCALE ANALYSIS]</scope>
    <source>
        <tissue>Brain</tissue>
    </source>
</reference>
<name>PLPR2_MOUSE</name>
<dbReference type="EMBL" id="AY438023">
    <property type="protein sequence ID" value="AAR98841.1"/>
    <property type="molecule type" value="mRNA"/>
</dbReference>
<dbReference type="EMBL" id="AK082453">
    <property type="protein sequence ID" value="BAC38494.1"/>
    <property type="molecule type" value="mRNA"/>
</dbReference>
<dbReference type="EMBL" id="BC018242">
    <property type="protein sequence ID" value="AAH18242.1"/>
    <property type="molecule type" value="mRNA"/>
</dbReference>
<dbReference type="EMBL" id="BC023082">
    <property type="protein sequence ID" value="AAH23082.1"/>
    <property type="molecule type" value="mRNA"/>
</dbReference>
<dbReference type="CCDS" id="CCDS72203.1">
    <molecule id="Q8VCY8-2"/>
</dbReference>
<dbReference type="CCDS" id="CCDS80966.1">
    <molecule id="Q8VCY8-1"/>
</dbReference>
<dbReference type="RefSeq" id="NP_001277228.1">
    <molecule id="Q8VCY8-2"/>
    <property type="nucleotide sequence ID" value="NM_001290299.1"/>
</dbReference>
<dbReference type="RefSeq" id="NP_001397526.1">
    <molecule id="Q8VCY8-1"/>
    <property type="nucleotide sequence ID" value="NM_001410597.1"/>
</dbReference>
<dbReference type="RefSeq" id="NP_659184.1">
    <molecule id="Q8VCY8-1"/>
    <property type="nucleotide sequence ID" value="NM_144935.1"/>
</dbReference>
<dbReference type="RefSeq" id="XP_006510250.1">
    <property type="nucleotide sequence ID" value="XM_006510187.3"/>
</dbReference>
<dbReference type="BioGRID" id="231614">
    <property type="interactions" value="3"/>
</dbReference>
<dbReference type="FunCoup" id="Q8VCY8">
    <property type="interactions" value="127"/>
</dbReference>
<dbReference type="IntAct" id="Q8VCY8">
    <property type="interactions" value="1"/>
</dbReference>
<dbReference type="MINT" id="Q8VCY8"/>
<dbReference type="STRING" id="10090.ENSMUSP00000038616"/>
<dbReference type="GlyCosmos" id="Q8VCY8">
    <property type="glycosylation" value="1 site, No reported glycans"/>
</dbReference>
<dbReference type="GlyGen" id="Q8VCY8">
    <property type="glycosylation" value="1 site, 1 N-linked glycan (1 site)"/>
</dbReference>
<dbReference type="iPTMnet" id="Q8VCY8"/>
<dbReference type="PhosphoSitePlus" id="Q8VCY8"/>
<dbReference type="SwissPalm" id="Q8VCY8"/>
<dbReference type="PaxDb" id="10090-ENSMUSP00000038616"/>
<dbReference type="ProteomicsDB" id="288260">
    <molecule id="Q8VCY8-1"/>
</dbReference>
<dbReference type="ProteomicsDB" id="288261">
    <molecule id="Q8VCY8-2"/>
</dbReference>
<dbReference type="Antibodypedia" id="25796">
    <property type="antibodies" value="88 antibodies from 22 providers"/>
</dbReference>
<dbReference type="DNASU" id="235044"/>
<dbReference type="Ensembl" id="ENSMUST00000046371.13">
    <molecule id="Q8VCY8-2"/>
    <property type="protein sequence ID" value="ENSMUSP00000038616.7"/>
    <property type="gene ID" value="ENSMUSG00000040563.14"/>
</dbReference>
<dbReference type="Ensembl" id="ENSMUST00000190387.7">
    <molecule id="Q8VCY8-1"/>
    <property type="protein sequence ID" value="ENSMUSP00000139727.2"/>
    <property type="gene ID" value="ENSMUSG00000040563.14"/>
</dbReference>
<dbReference type="GeneID" id="235044"/>
<dbReference type="KEGG" id="mmu:235044"/>
<dbReference type="UCSC" id="uc009ona.2">
    <molecule id="Q8VCY8-2"/>
    <property type="organism name" value="mouse"/>
</dbReference>
<dbReference type="UCSC" id="uc009onb.1">
    <molecule id="Q8VCY8-1"/>
    <property type="organism name" value="mouse"/>
</dbReference>
<dbReference type="AGR" id="MGI:2384575"/>
<dbReference type="CTD" id="64748"/>
<dbReference type="MGI" id="MGI:2384575">
    <property type="gene designation" value="Plppr2"/>
</dbReference>
<dbReference type="VEuPathDB" id="HostDB:ENSMUSG00000040563"/>
<dbReference type="eggNOG" id="KOG3030">
    <property type="taxonomic scope" value="Eukaryota"/>
</dbReference>
<dbReference type="GeneTree" id="ENSGT00940000158145"/>
<dbReference type="HOGENOM" id="CLU_021458_1_1_1"/>
<dbReference type="InParanoid" id="Q8VCY8"/>
<dbReference type="OMA" id="NAYIQPF"/>
<dbReference type="OrthoDB" id="69991at9989"/>
<dbReference type="PhylomeDB" id="Q8VCY8"/>
<dbReference type="TreeFam" id="TF316040"/>
<dbReference type="Reactome" id="R-MMU-419408">
    <property type="pathway name" value="Lysosphingolipid and LPA receptors"/>
</dbReference>
<dbReference type="BioGRID-ORCS" id="235044">
    <property type="hits" value="5 hits in 59 CRISPR screens"/>
</dbReference>
<dbReference type="CD-CODE" id="CE726F99">
    <property type="entry name" value="Postsynaptic density"/>
</dbReference>
<dbReference type="ChiTaRS" id="Plppr2">
    <property type="organism name" value="mouse"/>
</dbReference>
<dbReference type="PRO" id="PR:Q8VCY8"/>
<dbReference type="Proteomes" id="UP000000589">
    <property type="component" value="Chromosome 9"/>
</dbReference>
<dbReference type="RNAct" id="Q8VCY8">
    <property type="molecule type" value="protein"/>
</dbReference>
<dbReference type="Bgee" id="ENSMUSG00000040563">
    <property type="expression patterns" value="Expressed in subiculum and 181 other cell types or tissues"/>
</dbReference>
<dbReference type="ExpressionAtlas" id="Q8VCY8">
    <property type="expression patterns" value="baseline and differential"/>
</dbReference>
<dbReference type="GO" id="GO:0016020">
    <property type="term" value="C:membrane"/>
    <property type="evidence" value="ECO:0007669"/>
    <property type="project" value="UniProtKB-SubCell"/>
</dbReference>
<dbReference type="GO" id="GO:0008195">
    <property type="term" value="F:phosphatidate phosphatase activity"/>
    <property type="evidence" value="ECO:0007669"/>
    <property type="project" value="UniProtKB-EC"/>
</dbReference>
<dbReference type="GO" id="GO:0006644">
    <property type="term" value="P:phospholipid metabolic process"/>
    <property type="evidence" value="ECO:0007669"/>
    <property type="project" value="InterPro"/>
</dbReference>
<dbReference type="CDD" id="cd03384">
    <property type="entry name" value="PAP2_wunen"/>
    <property type="match status" value="1"/>
</dbReference>
<dbReference type="FunFam" id="1.20.144.10:FF:000006">
    <property type="entry name" value="Phospholipid phosphatase-related protein type 2 isoform X1"/>
    <property type="match status" value="1"/>
</dbReference>
<dbReference type="Gene3D" id="1.20.144.10">
    <property type="entry name" value="Phosphatidic acid phosphatase type 2/haloperoxidase"/>
    <property type="match status" value="1"/>
</dbReference>
<dbReference type="InterPro" id="IPR036938">
    <property type="entry name" value="P_Acid_Pase_2/haloperoxi_sf"/>
</dbReference>
<dbReference type="InterPro" id="IPR000326">
    <property type="entry name" value="P_Acid_Pase_2/haloperoxidase"/>
</dbReference>
<dbReference type="InterPro" id="IPR043216">
    <property type="entry name" value="PA_PP_rel"/>
</dbReference>
<dbReference type="PANTHER" id="PTHR10165">
    <property type="entry name" value="LIPID PHOSPHATE PHOSPHATASE"/>
    <property type="match status" value="1"/>
</dbReference>
<dbReference type="PANTHER" id="PTHR10165:SF15">
    <property type="entry name" value="PHOSPHOLIPID PHOSPHATASE-RELATED PROTEIN TYPE 2"/>
    <property type="match status" value="1"/>
</dbReference>
<dbReference type="Pfam" id="PF01569">
    <property type="entry name" value="PAP2"/>
    <property type="match status" value="1"/>
</dbReference>
<dbReference type="SMART" id="SM00014">
    <property type="entry name" value="acidPPc"/>
    <property type="match status" value="1"/>
</dbReference>
<dbReference type="SUPFAM" id="SSF48317">
    <property type="entry name" value="Acid phosphatase/Vanadium-dependent haloperoxidase"/>
    <property type="match status" value="1"/>
</dbReference>
<gene>
    <name evidence="10" type="primary">Plppr2</name>
    <name evidence="2" type="synonym">Lppr2</name>
    <name evidence="5" type="synonym">Prg4</name>
</gene>
<proteinExistence type="evidence at protein level"/>
<feature type="chain" id="PRO_0000317539" description="Phospholipid phosphatase-related protein type 2">
    <location>
        <begin position="1"/>
        <end position="343"/>
    </location>
</feature>
<feature type="transmembrane region" description="Helical" evidence="3">
    <location>
        <begin position="12"/>
        <end position="32"/>
    </location>
</feature>
<feature type="transmembrane region" description="Helical" evidence="3">
    <location>
        <begin position="72"/>
        <end position="92"/>
    </location>
</feature>
<feature type="transmembrane region" description="Helical" evidence="3">
    <location>
        <begin position="129"/>
        <end position="149"/>
    </location>
</feature>
<feature type="transmembrane region" description="Helical" evidence="3">
    <location>
        <begin position="210"/>
        <end position="230"/>
    </location>
</feature>
<feature type="transmembrane region" description="Helical" evidence="3">
    <location>
        <begin position="239"/>
        <end position="259"/>
    </location>
</feature>
<feature type="transmembrane region" description="Helical" evidence="3">
    <location>
        <begin position="266"/>
        <end position="286"/>
    </location>
</feature>
<feature type="region of interest" description="Disordered" evidence="4">
    <location>
        <begin position="291"/>
        <end position="343"/>
    </location>
</feature>
<feature type="compositionally biased region" description="Basic residues" evidence="4">
    <location>
        <begin position="322"/>
        <end position="335"/>
    </location>
</feature>
<feature type="modified residue" description="Phosphoserine" evidence="11">
    <location>
        <position position="299"/>
    </location>
</feature>
<feature type="modified residue" description="Phosphoserine" evidence="11">
    <location>
        <position position="312"/>
    </location>
</feature>
<feature type="glycosylation site" description="N-linked (GlcNAc...) asparagine" evidence="3">
    <location>
        <position position="165"/>
    </location>
</feature>
<feature type="splice variant" id="VSP_031012" description="In isoform 2." evidence="6 7">
    <original>NPRPAGRIRHRHGSPHPSRRTVPAVAT</original>
    <variation>LSVAQEPETCRPHSTPARLTPSKPQNCARRGHLIPSCVSSRAPAMCSSPRVPRPRLRSEPTPLPLPLPLPAPTPSQGPSPSSPGPGGPGGGGGRGRKLLLPTPLLRDLYTLSGLHPSPFHRDNFSPYLFASRDHLL</variation>
    <location>
        <begin position="317"/>
        <end position="343"/>
    </location>
</feature>
<feature type="modified residue" description="Phosphoserine" evidence="11">
    <location sequence="Q8VCY8-2">
        <position position="441"/>
    </location>
</feature>
<keyword id="KW-0025">Alternative splicing</keyword>
<keyword id="KW-0325">Glycoprotein</keyword>
<keyword id="KW-0472">Membrane</keyword>
<keyword id="KW-0597">Phosphoprotein</keyword>
<keyword id="KW-1185">Reference proteome</keyword>
<keyword id="KW-0812">Transmembrane</keyword>
<keyword id="KW-1133">Transmembrane helix</keyword>
<organism>
    <name type="scientific">Mus musculus</name>
    <name type="common">Mouse</name>
    <dbReference type="NCBI Taxonomy" id="10090"/>
    <lineage>
        <taxon>Eukaryota</taxon>
        <taxon>Metazoa</taxon>
        <taxon>Chordata</taxon>
        <taxon>Craniata</taxon>
        <taxon>Vertebrata</taxon>
        <taxon>Euteleostomi</taxon>
        <taxon>Mammalia</taxon>
        <taxon>Eutheria</taxon>
        <taxon>Euarchontoglires</taxon>
        <taxon>Glires</taxon>
        <taxon>Rodentia</taxon>
        <taxon>Myomorpha</taxon>
        <taxon>Muroidea</taxon>
        <taxon>Muridae</taxon>
        <taxon>Murinae</taxon>
        <taxon>Mus</taxon>
        <taxon>Mus</taxon>
    </lineage>
</organism>
<evidence type="ECO:0000250" key="1">
    <source>
        <dbReference type="UniProtKB" id="Q6WAY2"/>
    </source>
</evidence>
<evidence type="ECO:0000250" key="2">
    <source>
        <dbReference type="UniProtKB" id="Q96GM1"/>
    </source>
</evidence>
<evidence type="ECO:0000255" key="3"/>
<evidence type="ECO:0000256" key="4">
    <source>
        <dbReference type="SAM" id="MobiDB-lite"/>
    </source>
</evidence>
<evidence type="ECO:0000303" key="5">
    <source>
    </source>
</evidence>
<evidence type="ECO:0000303" key="6">
    <source>
    </source>
</evidence>
<evidence type="ECO:0000303" key="7">
    <source>
    </source>
</evidence>
<evidence type="ECO:0000305" key="8"/>
<evidence type="ECO:0000305" key="9">
    <source>
    </source>
</evidence>
<evidence type="ECO:0000312" key="10">
    <source>
        <dbReference type="MGI" id="MGI:2384575"/>
    </source>
</evidence>
<evidence type="ECO:0007744" key="11">
    <source>
    </source>
</evidence>
<sequence length="343" mass="36936">MAGGRPHLKRSFSIIPCFVFVESVLLGIVVLLAYRLEFTDTFPVHTQGFFCYDSAYAKPYPGPEAASRAPPALIYALVTAGPTLTILLGELARAFFPAPPSSSPVSGESTIVSGACCRFSPPLRRLVRFLGVYSFGLFTTTIFANAGQVVTGNPTPHFLSVCRPNYTALGCPPPSPDRPGPDRFVTDQSACAGSPSLVAAARRAFPCKDAALCAYAVTYTAMYVTLVFRVKGSRLVKPSLCLALLCPAFLVGVVRVAEYRNHWSDVLAGFLTGAAIATFLVTCVVHNFQSRPHSGRRLSPWEDLSQAPTMDSPLEKNPRPAGRIRHRHGSPHPSRRTVPAVAT</sequence>